<keyword id="KW-0975">Bacterial flagellum</keyword>
<keyword id="KW-0574">Periplasm</keyword>
<keyword id="KW-1185">Reference proteome</keyword>
<keyword id="KW-0732">Signal</keyword>
<dbReference type="EMBL" id="L49337">
    <property type="protein sequence ID" value="AAB81415.1"/>
    <property type="molecule type" value="Genomic_DNA"/>
</dbReference>
<dbReference type="EMBL" id="AL591688">
    <property type="protein sequence ID" value="CAC45236.1"/>
    <property type="molecule type" value="Genomic_DNA"/>
</dbReference>
<dbReference type="RefSeq" id="NP_384770.1">
    <property type="nucleotide sequence ID" value="NC_003047.1"/>
</dbReference>
<dbReference type="RefSeq" id="WP_003529892.1">
    <property type="nucleotide sequence ID" value="NC_003047.1"/>
</dbReference>
<dbReference type="SMR" id="Q52948"/>
<dbReference type="EnsemblBacteria" id="CAC45236">
    <property type="protein sequence ID" value="CAC45236"/>
    <property type="gene ID" value="SMc03032"/>
</dbReference>
<dbReference type="KEGG" id="sme:SMc03032"/>
<dbReference type="PATRIC" id="fig|266834.11.peg.2038"/>
<dbReference type="eggNOG" id="COG1706">
    <property type="taxonomic scope" value="Bacteria"/>
</dbReference>
<dbReference type="HOGENOM" id="CLU_045235_1_0_5"/>
<dbReference type="OrthoDB" id="9786431at2"/>
<dbReference type="Proteomes" id="UP000001976">
    <property type="component" value="Chromosome"/>
</dbReference>
<dbReference type="GO" id="GO:0009428">
    <property type="term" value="C:bacterial-type flagellum basal body, distal rod, P ring"/>
    <property type="evidence" value="ECO:0007669"/>
    <property type="project" value="InterPro"/>
</dbReference>
<dbReference type="GO" id="GO:0030288">
    <property type="term" value="C:outer membrane-bounded periplasmic space"/>
    <property type="evidence" value="ECO:0007669"/>
    <property type="project" value="InterPro"/>
</dbReference>
<dbReference type="GO" id="GO:0005198">
    <property type="term" value="F:structural molecule activity"/>
    <property type="evidence" value="ECO:0007669"/>
    <property type="project" value="InterPro"/>
</dbReference>
<dbReference type="GO" id="GO:0071973">
    <property type="term" value="P:bacterial-type flagellum-dependent cell motility"/>
    <property type="evidence" value="ECO:0007669"/>
    <property type="project" value="InterPro"/>
</dbReference>
<dbReference type="HAMAP" id="MF_00416">
    <property type="entry name" value="FlgI"/>
    <property type="match status" value="1"/>
</dbReference>
<dbReference type="InterPro" id="IPR001782">
    <property type="entry name" value="Flag_FlgI"/>
</dbReference>
<dbReference type="NCBIfam" id="NF003676">
    <property type="entry name" value="PRK05303.1"/>
    <property type="match status" value="1"/>
</dbReference>
<dbReference type="PANTHER" id="PTHR30381">
    <property type="entry name" value="FLAGELLAR P-RING PERIPLASMIC PROTEIN FLGI"/>
    <property type="match status" value="1"/>
</dbReference>
<dbReference type="PANTHER" id="PTHR30381:SF0">
    <property type="entry name" value="FLAGELLAR P-RING PROTEIN"/>
    <property type="match status" value="1"/>
</dbReference>
<dbReference type="Pfam" id="PF02119">
    <property type="entry name" value="FlgI"/>
    <property type="match status" value="1"/>
</dbReference>
<dbReference type="PRINTS" id="PR01010">
    <property type="entry name" value="FLGPRINGFLGI"/>
</dbReference>
<organism>
    <name type="scientific">Rhizobium meliloti (strain 1021)</name>
    <name type="common">Ensifer meliloti</name>
    <name type="synonym">Sinorhizobium meliloti</name>
    <dbReference type="NCBI Taxonomy" id="266834"/>
    <lineage>
        <taxon>Bacteria</taxon>
        <taxon>Pseudomonadati</taxon>
        <taxon>Pseudomonadota</taxon>
        <taxon>Alphaproteobacteria</taxon>
        <taxon>Hyphomicrobiales</taxon>
        <taxon>Rhizobiaceae</taxon>
        <taxon>Sinorhizobium/Ensifer group</taxon>
        <taxon>Sinorhizobium</taxon>
    </lineage>
</organism>
<sequence>MKINACNWLLTLAVVFAATLTSAYAASRIKDVASLQSGRDNQLIGYGLVVGLQGTGDSLRSSPFTDQSIRAMLQNLGISTQGGDSRTRNVAAVLVTATLPPFASPGSRLDVTVGSLGDATSLRGGTLVMTSLSGADGQIYAVAQGSVVVSGFNAQGEAAQLSQGVTTAGRVPNGAIIERELPSKFKDGFNLVLQLRNPDFSTAVGMAAAINRYAAAQFGGRIAEALDSQSVLVQKPKMADLARLMADVENLVIETDAPARVVINERTGTIVIGQDVRVAEVAVSYGTLTVQVSETPTIVQPEPFSRGETAYEPNTTIEAQADGGTVAILNGSSLRSLVAGLNSIGVKPDGIIAILQSIKSAGALQAELVLQ</sequence>
<protein>
    <recommendedName>
        <fullName>Flagellar P-ring protein</fullName>
    </recommendedName>
    <alternativeName>
        <fullName>Basal body P-ring protein</fullName>
    </alternativeName>
</protein>
<evidence type="ECO:0000250" key="1"/>
<evidence type="ECO:0000255" key="2"/>
<evidence type="ECO:0000305" key="3"/>
<accession>Q52948</accession>
<name>FLGI_RHIME</name>
<proteinExistence type="inferred from homology"/>
<comment type="function">
    <text evidence="1">Assembles around the rod to form the L-ring and probably protects the motor/basal body from shearing forces during rotation.</text>
</comment>
<comment type="subunit">
    <text evidence="1">The basal body constitutes a major portion of the flagellar organelle and consists of four rings (L,P,S, and M) mounted on a central rod.</text>
</comment>
<comment type="subcellular location">
    <subcellularLocation>
        <location evidence="1">Periplasm</location>
    </subcellularLocation>
    <subcellularLocation>
        <location evidence="1">Bacterial flagellum basal body</location>
    </subcellularLocation>
</comment>
<comment type="similarity">
    <text evidence="3">Belongs to the FlgI family.</text>
</comment>
<feature type="signal peptide" evidence="2">
    <location>
        <begin position="1"/>
        <end position="25"/>
    </location>
</feature>
<feature type="chain" id="PRO_0000009517" description="Flagellar P-ring protein">
    <location>
        <begin position="26"/>
        <end position="371"/>
    </location>
</feature>
<feature type="sequence conflict" description="In Ref. 1; AAB81415." evidence="3" ref="1">
    <original>N</original>
    <variation>K</variation>
    <location>
        <position position="7"/>
    </location>
</feature>
<feature type="sequence conflict" description="In Ref. 1; AAB81415." evidence="3" ref="1">
    <original>V</original>
    <variation>A</variation>
    <location>
        <position position="15"/>
    </location>
</feature>
<feature type="sequence conflict" description="In Ref. 1; AAB81415." evidence="3" ref="1">
    <original>G</original>
    <variation>GR</variation>
    <location>
        <position position="323"/>
    </location>
</feature>
<reference key="1">
    <citation type="submission" date="1996-03" db="EMBL/GenBank/DDBJ databases">
        <authorList>
            <person name="Platzer J."/>
            <person name="Schmitt R."/>
        </authorList>
    </citation>
    <scope>NUCLEOTIDE SEQUENCE [GENOMIC DNA]</scope>
    <source>
        <strain>RU11/001</strain>
    </source>
</reference>
<reference key="2">
    <citation type="journal article" date="2001" name="Proc. Natl. Acad. Sci. U.S.A.">
        <title>Analysis of the chromosome sequence of the legume symbiont Sinorhizobium meliloti strain 1021.</title>
        <authorList>
            <person name="Capela D."/>
            <person name="Barloy-Hubler F."/>
            <person name="Gouzy J."/>
            <person name="Bothe G."/>
            <person name="Ampe F."/>
            <person name="Batut J."/>
            <person name="Boistard P."/>
            <person name="Becker A."/>
            <person name="Boutry M."/>
            <person name="Cadieu E."/>
            <person name="Dreano S."/>
            <person name="Gloux S."/>
            <person name="Godrie T."/>
            <person name="Goffeau A."/>
            <person name="Kahn D."/>
            <person name="Kiss E."/>
            <person name="Lelaure V."/>
            <person name="Masuy D."/>
            <person name="Pohl T."/>
            <person name="Portetelle D."/>
            <person name="Puehler A."/>
            <person name="Purnelle B."/>
            <person name="Ramsperger U."/>
            <person name="Renard C."/>
            <person name="Thebault P."/>
            <person name="Vandenbol M."/>
            <person name="Weidner S."/>
            <person name="Galibert F."/>
        </authorList>
    </citation>
    <scope>NUCLEOTIDE SEQUENCE [LARGE SCALE GENOMIC DNA]</scope>
    <source>
        <strain>1021</strain>
    </source>
</reference>
<reference key="3">
    <citation type="journal article" date="2001" name="Science">
        <title>The composite genome of the legume symbiont Sinorhizobium meliloti.</title>
        <authorList>
            <person name="Galibert F."/>
            <person name="Finan T.M."/>
            <person name="Long S.R."/>
            <person name="Puehler A."/>
            <person name="Abola P."/>
            <person name="Ampe F."/>
            <person name="Barloy-Hubler F."/>
            <person name="Barnett M.J."/>
            <person name="Becker A."/>
            <person name="Boistard P."/>
            <person name="Bothe G."/>
            <person name="Boutry M."/>
            <person name="Bowser L."/>
            <person name="Buhrmester J."/>
            <person name="Cadieu E."/>
            <person name="Capela D."/>
            <person name="Chain P."/>
            <person name="Cowie A."/>
            <person name="Davis R.W."/>
            <person name="Dreano S."/>
            <person name="Federspiel N.A."/>
            <person name="Fisher R.F."/>
            <person name="Gloux S."/>
            <person name="Godrie T."/>
            <person name="Goffeau A."/>
            <person name="Golding B."/>
            <person name="Gouzy J."/>
            <person name="Gurjal M."/>
            <person name="Hernandez-Lucas I."/>
            <person name="Hong A."/>
            <person name="Huizar L."/>
            <person name="Hyman R.W."/>
            <person name="Jones T."/>
            <person name="Kahn D."/>
            <person name="Kahn M.L."/>
            <person name="Kalman S."/>
            <person name="Keating D.H."/>
            <person name="Kiss E."/>
            <person name="Komp C."/>
            <person name="Lelaure V."/>
            <person name="Masuy D."/>
            <person name="Palm C."/>
            <person name="Peck M.C."/>
            <person name="Pohl T.M."/>
            <person name="Portetelle D."/>
            <person name="Purnelle B."/>
            <person name="Ramsperger U."/>
            <person name="Surzycki R."/>
            <person name="Thebault P."/>
            <person name="Vandenbol M."/>
            <person name="Vorhoelter F.J."/>
            <person name="Weidner S."/>
            <person name="Wells D.H."/>
            <person name="Wong K."/>
            <person name="Yeh K.-C."/>
            <person name="Batut J."/>
        </authorList>
    </citation>
    <scope>NUCLEOTIDE SEQUENCE [LARGE SCALE GENOMIC DNA]</scope>
    <source>
        <strain>1021</strain>
    </source>
</reference>
<gene>
    <name type="primary">flgI</name>
    <name type="ordered locus">R00664</name>
    <name type="ORF">SMc03032</name>
</gene>